<organism>
    <name type="scientific">Sinorhizobium medicae (strain WSM419)</name>
    <name type="common">Ensifer medicae</name>
    <dbReference type="NCBI Taxonomy" id="366394"/>
    <lineage>
        <taxon>Bacteria</taxon>
        <taxon>Pseudomonadati</taxon>
        <taxon>Pseudomonadota</taxon>
        <taxon>Alphaproteobacteria</taxon>
        <taxon>Hyphomicrobiales</taxon>
        <taxon>Rhizobiaceae</taxon>
        <taxon>Sinorhizobium/Ensifer group</taxon>
        <taxon>Sinorhizobium</taxon>
    </lineage>
</organism>
<comment type="function">
    <text evidence="1">Required for the formation of a threonylcarbamoyl group on adenosine at position 37 (t(6)A37) in tRNAs that read codons beginning with adenine. Is involved in the transfer of the threonylcarbamoyl moiety of threonylcarbamoyl-AMP (TC-AMP) to the N6 group of A37, together with TsaE and TsaB. TsaD likely plays a direct catalytic role in this reaction.</text>
</comment>
<comment type="catalytic activity">
    <reaction evidence="1">
        <text>L-threonylcarbamoyladenylate + adenosine(37) in tRNA = N(6)-L-threonylcarbamoyladenosine(37) in tRNA + AMP + H(+)</text>
        <dbReference type="Rhea" id="RHEA:37059"/>
        <dbReference type="Rhea" id="RHEA-COMP:10162"/>
        <dbReference type="Rhea" id="RHEA-COMP:10163"/>
        <dbReference type="ChEBI" id="CHEBI:15378"/>
        <dbReference type="ChEBI" id="CHEBI:73682"/>
        <dbReference type="ChEBI" id="CHEBI:74411"/>
        <dbReference type="ChEBI" id="CHEBI:74418"/>
        <dbReference type="ChEBI" id="CHEBI:456215"/>
        <dbReference type="EC" id="2.3.1.234"/>
    </reaction>
</comment>
<comment type="cofactor">
    <cofactor evidence="1">
        <name>Fe(2+)</name>
        <dbReference type="ChEBI" id="CHEBI:29033"/>
    </cofactor>
    <text evidence="1">Binds 1 Fe(2+) ion per subunit.</text>
</comment>
<comment type="subcellular location">
    <subcellularLocation>
        <location evidence="1">Cytoplasm</location>
    </subcellularLocation>
</comment>
<comment type="similarity">
    <text evidence="1">Belongs to the KAE1 / TsaD family.</text>
</comment>
<accession>A6UDR4</accession>
<dbReference type="EC" id="2.3.1.234" evidence="1"/>
<dbReference type="EMBL" id="CP000738">
    <property type="protein sequence ID" value="ABR61794.1"/>
    <property type="molecule type" value="Genomic_DNA"/>
</dbReference>
<dbReference type="RefSeq" id="YP_001328629.1">
    <property type="nucleotide sequence ID" value="NC_009636.1"/>
</dbReference>
<dbReference type="SMR" id="A6UDR4"/>
<dbReference type="STRING" id="366394.Smed_2965"/>
<dbReference type="KEGG" id="smd:Smed_2965"/>
<dbReference type="PATRIC" id="fig|366394.8.peg.6188"/>
<dbReference type="eggNOG" id="COG0533">
    <property type="taxonomic scope" value="Bacteria"/>
</dbReference>
<dbReference type="HOGENOM" id="CLU_023208_0_2_5"/>
<dbReference type="OrthoDB" id="9806197at2"/>
<dbReference type="Proteomes" id="UP000001108">
    <property type="component" value="Chromosome"/>
</dbReference>
<dbReference type="GO" id="GO:0005737">
    <property type="term" value="C:cytoplasm"/>
    <property type="evidence" value="ECO:0007669"/>
    <property type="project" value="UniProtKB-SubCell"/>
</dbReference>
<dbReference type="GO" id="GO:0005506">
    <property type="term" value="F:iron ion binding"/>
    <property type="evidence" value="ECO:0007669"/>
    <property type="project" value="UniProtKB-UniRule"/>
</dbReference>
<dbReference type="GO" id="GO:0061711">
    <property type="term" value="F:N(6)-L-threonylcarbamoyladenine synthase activity"/>
    <property type="evidence" value="ECO:0007669"/>
    <property type="project" value="UniProtKB-EC"/>
</dbReference>
<dbReference type="GO" id="GO:0002949">
    <property type="term" value="P:tRNA threonylcarbamoyladenosine modification"/>
    <property type="evidence" value="ECO:0007669"/>
    <property type="project" value="UniProtKB-UniRule"/>
</dbReference>
<dbReference type="CDD" id="cd24133">
    <property type="entry name" value="ASKHA_NBD_TsaD_bac"/>
    <property type="match status" value="1"/>
</dbReference>
<dbReference type="FunFam" id="3.30.420.40:FF:000040">
    <property type="entry name" value="tRNA N6-adenosine threonylcarbamoyltransferase"/>
    <property type="match status" value="1"/>
</dbReference>
<dbReference type="Gene3D" id="3.30.420.40">
    <property type="match status" value="2"/>
</dbReference>
<dbReference type="HAMAP" id="MF_01445">
    <property type="entry name" value="TsaD"/>
    <property type="match status" value="1"/>
</dbReference>
<dbReference type="InterPro" id="IPR043129">
    <property type="entry name" value="ATPase_NBD"/>
</dbReference>
<dbReference type="InterPro" id="IPR000905">
    <property type="entry name" value="Gcp-like_dom"/>
</dbReference>
<dbReference type="InterPro" id="IPR017861">
    <property type="entry name" value="KAE1/TsaD"/>
</dbReference>
<dbReference type="InterPro" id="IPR022450">
    <property type="entry name" value="TsaD"/>
</dbReference>
<dbReference type="NCBIfam" id="TIGR00329">
    <property type="entry name" value="gcp_kae1"/>
    <property type="match status" value="1"/>
</dbReference>
<dbReference type="NCBIfam" id="TIGR03723">
    <property type="entry name" value="T6A_TsaD_YgjD"/>
    <property type="match status" value="1"/>
</dbReference>
<dbReference type="PANTHER" id="PTHR11735">
    <property type="entry name" value="TRNA N6-ADENOSINE THREONYLCARBAMOYLTRANSFERASE"/>
    <property type="match status" value="1"/>
</dbReference>
<dbReference type="PANTHER" id="PTHR11735:SF6">
    <property type="entry name" value="TRNA N6-ADENOSINE THREONYLCARBAMOYLTRANSFERASE, MITOCHONDRIAL"/>
    <property type="match status" value="1"/>
</dbReference>
<dbReference type="Pfam" id="PF00814">
    <property type="entry name" value="TsaD"/>
    <property type="match status" value="1"/>
</dbReference>
<dbReference type="PRINTS" id="PR00789">
    <property type="entry name" value="OSIALOPTASE"/>
</dbReference>
<dbReference type="SUPFAM" id="SSF53067">
    <property type="entry name" value="Actin-like ATPase domain"/>
    <property type="match status" value="1"/>
</dbReference>
<proteinExistence type="inferred from homology"/>
<keyword id="KW-0012">Acyltransferase</keyword>
<keyword id="KW-0963">Cytoplasm</keyword>
<keyword id="KW-0408">Iron</keyword>
<keyword id="KW-0479">Metal-binding</keyword>
<keyword id="KW-0808">Transferase</keyword>
<keyword id="KW-0819">tRNA processing</keyword>
<reference key="1">
    <citation type="submission" date="2007-06" db="EMBL/GenBank/DDBJ databases">
        <title>Complete sequence of Sinorhizobium medicae WSM419 chromosome.</title>
        <authorList>
            <consortium name="US DOE Joint Genome Institute"/>
            <person name="Copeland A."/>
            <person name="Lucas S."/>
            <person name="Lapidus A."/>
            <person name="Barry K."/>
            <person name="Glavina del Rio T."/>
            <person name="Dalin E."/>
            <person name="Tice H."/>
            <person name="Pitluck S."/>
            <person name="Chain P."/>
            <person name="Malfatti S."/>
            <person name="Shin M."/>
            <person name="Vergez L."/>
            <person name="Schmutz J."/>
            <person name="Larimer F."/>
            <person name="Land M."/>
            <person name="Hauser L."/>
            <person name="Kyrpides N."/>
            <person name="Mikhailova N."/>
            <person name="Reeve W.G."/>
            <person name="Richardson P."/>
        </authorList>
    </citation>
    <scope>NUCLEOTIDE SEQUENCE [LARGE SCALE GENOMIC DNA]</scope>
    <source>
        <strain>WSM419</strain>
    </source>
</reference>
<gene>
    <name evidence="1" type="primary">tsaD</name>
    <name type="synonym">gcp</name>
    <name type="ordered locus">Smed_2965</name>
</gene>
<evidence type="ECO:0000255" key="1">
    <source>
        <dbReference type="HAMAP-Rule" id="MF_01445"/>
    </source>
</evidence>
<name>TSAD_SINMW</name>
<sequence>MRILGIETSCDETAASVVMRDEEGRGRILGDVVLSQLEEHSAYGGVVPEIAARAHVEALDTLIVEALLRAGVKLEDIDAIAATSGPGLIGGLIVGLMTGKAIARATGKPLYAVNHLEGHALTARLTDELQFPYLMLLVSGGHTQLILVKGVGEYERWGTTIDDALGEAFDKTAKLLGLPYPGGPAVERAARTGNPERFDFPRPLVGDARLDFSFSGLKTAVRQAAKSLEPVTEADIADICASFQRAISRTLRDRVGRSLKRFKAESASVAQPALVVAGGVAANQALRQTLQSLCDEHGFRFVAPPLSLCTDNAAMIAWAGAERLAAGLPADGLDVAPRSRWPLDAEAKALIGSGRRGAKA</sequence>
<feature type="chain" id="PRO_1000024458" description="tRNA N6-adenosine threonylcarbamoyltransferase">
    <location>
        <begin position="1"/>
        <end position="360"/>
    </location>
</feature>
<feature type="binding site" evidence="1">
    <location>
        <position position="115"/>
    </location>
    <ligand>
        <name>Fe cation</name>
        <dbReference type="ChEBI" id="CHEBI:24875"/>
    </ligand>
</feature>
<feature type="binding site" evidence="1">
    <location>
        <position position="119"/>
    </location>
    <ligand>
        <name>Fe cation</name>
        <dbReference type="ChEBI" id="CHEBI:24875"/>
    </ligand>
</feature>
<feature type="binding site" evidence="1">
    <location>
        <begin position="137"/>
        <end position="141"/>
    </location>
    <ligand>
        <name>substrate</name>
    </ligand>
</feature>
<feature type="binding site" evidence="1">
    <location>
        <position position="170"/>
    </location>
    <ligand>
        <name>substrate</name>
    </ligand>
</feature>
<feature type="binding site" evidence="1">
    <location>
        <position position="183"/>
    </location>
    <ligand>
        <name>substrate</name>
    </ligand>
</feature>
<feature type="binding site" evidence="1">
    <location>
        <position position="283"/>
    </location>
    <ligand>
        <name>substrate</name>
    </ligand>
</feature>
<feature type="binding site" evidence="1">
    <location>
        <position position="311"/>
    </location>
    <ligand>
        <name>Fe cation</name>
        <dbReference type="ChEBI" id="CHEBI:24875"/>
    </ligand>
</feature>
<protein>
    <recommendedName>
        <fullName evidence="1">tRNA N6-adenosine threonylcarbamoyltransferase</fullName>
        <ecNumber evidence="1">2.3.1.234</ecNumber>
    </recommendedName>
    <alternativeName>
        <fullName evidence="1">N6-L-threonylcarbamoyladenine synthase</fullName>
        <shortName evidence="1">t(6)A synthase</shortName>
    </alternativeName>
    <alternativeName>
        <fullName evidence="1">t(6)A37 threonylcarbamoyladenosine biosynthesis protein TsaD</fullName>
    </alternativeName>
    <alternativeName>
        <fullName evidence="1">tRNA threonylcarbamoyladenosine biosynthesis protein TsaD</fullName>
    </alternativeName>
</protein>